<gene>
    <name type="primary">hisE</name>
    <name type="ordered locus">SSO6223</name>
</gene>
<protein>
    <recommendedName>
        <fullName>Phosphoribosyl-ATP pyrophosphatase</fullName>
        <shortName>PRA-PH</shortName>
        <ecNumber>3.6.1.31</ecNumber>
    </recommendedName>
</protein>
<dbReference type="EC" id="3.6.1.31"/>
<dbReference type="EMBL" id="U82227">
    <property type="protein sequence ID" value="AAB63024.1"/>
    <property type="molecule type" value="Genomic_DNA"/>
</dbReference>
<dbReference type="EMBL" id="AE006641">
    <property type="protein sequence ID" value="AAK40910.1"/>
    <property type="status" value="ALT_INIT"/>
    <property type="molecule type" value="Genomic_DNA"/>
</dbReference>
<dbReference type="PIR" id="G90206">
    <property type="entry name" value="G90206"/>
</dbReference>
<dbReference type="RefSeq" id="WP_009991118.1">
    <property type="nucleotide sequence ID" value="NC_002754.1"/>
</dbReference>
<dbReference type="SMR" id="O33776"/>
<dbReference type="FunCoup" id="O33776">
    <property type="interactions" value="89"/>
</dbReference>
<dbReference type="STRING" id="273057.SSO6223"/>
<dbReference type="PaxDb" id="273057-SSO6223"/>
<dbReference type="EnsemblBacteria" id="AAK40910">
    <property type="protein sequence ID" value="AAK40910"/>
    <property type="gene ID" value="SSO6223"/>
</dbReference>
<dbReference type="GeneID" id="44129600"/>
<dbReference type="KEGG" id="sso:SSO6223"/>
<dbReference type="PATRIC" id="fig|273057.12.peg.606"/>
<dbReference type="eggNOG" id="arCOG02677">
    <property type="taxonomic scope" value="Archaea"/>
</dbReference>
<dbReference type="HOGENOM" id="CLU_123337_1_1_2"/>
<dbReference type="InParanoid" id="O33776"/>
<dbReference type="PhylomeDB" id="O33776"/>
<dbReference type="UniPathway" id="UPA00031">
    <property type="reaction ID" value="UER00007"/>
</dbReference>
<dbReference type="Proteomes" id="UP000001974">
    <property type="component" value="Chromosome"/>
</dbReference>
<dbReference type="GO" id="GO:0005737">
    <property type="term" value="C:cytoplasm"/>
    <property type="evidence" value="ECO:0007669"/>
    <property type="project" value="UniProtKB-SubCell"/>
</dbReference>
<dbReference type="GO" id="GO:0005524">
    <property type="term" value="F:ATP binding"/>
    <property type="evidence" value="ECO:0007669"/>
    <property type="project" value="UniProtKB-KW"/>
</dbReference>
<dbReference type="GO" id="GO:0004636">
    <property type="term" value="F:phosphoribosyl-ATP diphosphatase activity"/>
    <property type="evidence" value="ECO:0007669"/>
    <property type="project" value="UniProtKB-UniRule"/>
</dbReference>
<dbReference type="GO" id="GO:0000105">
    <property type="term" value="P:L-histidine biosynthetic process"/>
    <property type="evidence" value="ECO:0007669"/>
    <property type="project" value="UniProtKB-UniRule"/>
</dbReference>
<dbReference type="CDD" id="cd11534">
    <property type="entry name" value="NTP-PPase_HisIE_like"/>
    <property type="match status" value="1"/>
</dbReference>
<dbReference type="Gene3D" id="1.10.287.1080">
    <property type="entry name" value="MazG-like"/>
    <property type="match status" value="1"/>
</dbReference>
<dbReference type="HAMAP" id="MF_01020">
    <property type="entry name" value="HisE"/>
    <property type="match status" value="1"/>
</dbReference>
<dbReference type="InterPro" id="IPR008179">
    <property type="entry name" value="HisE"/>
</dbReference>
<dbReference type="InterPro" id="IPR021130">
    <property type="entry name" value="PRib-ATP_PPHydrolase-like"/>
</dbReference>
<dbReference type="NCBIfam" id="TIGR03188">
    <property type="entry name" value="histidine_hisI"/>
    <property type="match status" value="1"/>
</dbReference>
<dbReference type="PANTHER" id="PTHR42945">
    <property type="entry name" value="HISTIDINE BIOSYNTHESIS BIFUNCTIONAL PROTEIN"/>
    <property type="match status" value="1"/>
</dbReference>
<dbReference type="PANTHER" id="PTHR42945:SF1">
    <property type="entry name" value="HISTIDINE BIOSYNTHESIS BIFUNCTIONAL PROTEIN HIS7"/>
    <property type="match status" value="1"/>
</dbReference>
<dbReference type="Pfam" id="PF01503">
    <property type="entry name" value="PRA-PH"/>
    <property type="match status" value="1"/>
</dbReference>
<dbReference type="SUPFAM" id="SSF101386">
    <property type="entry name" value="all-alpha NTP pyrophosphatases"/>
    <property type="match status" value="1"/>
</dbReference>
<reference key="1">
    <citation type="journal article" date="1997" name="J. Bacteriol.">
        <title>Evolutionary analysis of the hisCGABdFDEHI gene cluster from the archaeon Sulfolobus solfataricus P2.</title>
        <authorList>
            <person name="Charlebois R.L."/>
            <person name="Sensen C.W."/>
            <person name="Doolittle W.F."/>
            <person name="Brown J.R."/>
        </authorList>
    </citation>
    <scope>NUCLEOTIDE SEQUENCE [GENOMIC DNA]</scope>
    <source>
        <strain>ATCC 35092 / DSM 1617 / JCM 11322 / P2</strain>
    </source>
</reference>
<reference key="2">
    <citation type="journal article" date="2001" name="Proc. Natl. Acad. Sci. U.S.A.">
        <title>The complete genome of the crenarchaeon Sulfolobus solfataricus P2.</title>
        <authorList>
            <person name="She Q."/>
            <person name="Singh R.K."/>
            <person name="Confalonieri F."/>
            <person name="Zivanovic Y."/>
            <person name="Allard G."/>
            <person name="Awayez M.J."/>
            <person name="Chan-Weiher C.C.-Y."/>
            <person name="Clausen I.G."/>
            <person name="Curtis B.A."/>
            <person name="De Moors A."/>
            <person name="Erauso G."/>
            <person name="Fletcher C."/>
            <person name="Gordon P.M.K."/>
            <person name="Heikamp-de Jong I."/>
            <person name="Jeffries A.C."/>
            <person name="Kozera C.J."/>
            <person name="Medina N."/>
            <person name="Peng X."/>
            <person name="Thi-Ngoc H.P."/>
            <person name="Redder P."/>
            <person name="Schenk M.E."/>
            <person name="Theriault C."/>
            <person name="Tolstrup N."/>
            <person name="Charlebois R.L."/>
            <person name="Doolittle W.F."/>
            <person name="Duguet M."/>
            <person name="Gaasterland T."/>
            <person name="Garrett R.A."/>
            <person name="Ragan M.A."/>
            <person name="Sensen C.W."/>
            <person name="Van der Oost J."/>
        </authorList>
    </citation>
    <scope>NUCLEOTIDE SEQUENCE [LARGE SCALE GENOMIC DNA]</scope>
    <source>
        <strain>ATCC 35092 / DSM 1617 / JCM 11322 / P2</strain>
    </source>
</reference>
<feature type="chain" id="PRO_0000136398" description="Phosphoribosyl-ATP pyrophosphatase">
    <location>
        <begin position="1"/>
        <end position="94"/>
    </location>
</feature>
<organism>
    <name type="scientific">Saccharolobus solfataricus (strain ATCC 35092 / DSM 1617 / JCM 11322 / P2)</name>
    <name type="common">Sulfolobus solfataricus</name>
    <dbReference type="NCBI Taxonomy" id="273057"/>
    <lineage>
        <taxon>Archaea</taxon>
        <taxon>Thermoproteota</taxon>
        <taxon>Thermoprotei</taxon>
        <taxon>Sulfolobales</taxon>
        <taxon>Sulfolobaceae</taxon>
        <taxon>Saccharolobus</taxon>
    </lineage>
</organism>
<name>HIS2_SACS2</name>
<comment type="catalytic activity">
    <reaction>
        <text>1-(5-phospho-beta-D-ribosyl)-ATP + H2O = 1-(5-phospho-beta-D-ribosyl)-5'-AMP + diphosphate + H(+)</text>
        <dbReference type="Rhea" id="RHEA:22828"/>
        <dbReference type="ChEBI" id="CHEBI:15377"/>
        <dbReference type="ChEBI" id="CHEBI:15378"/>
        <dbReference type="ChEBI" id="CHEBI:33019"/>
        <dbReference type="ChEBI" id="CHEBI:59457"/>
        <dbReference type="ChEBI" id="CHEBI:73183"/>
        <dbReference type="EC" id="3.6.1.31"/>
    </reaction>
</comment>
<comment type="pathway">
    <text>Amino-acid biosynthesis; L-histidine biosynthesis; L-histidine from 5-phospho-alpha-D-ribose 1-diphosphate: step 2/9.</text>
</comment>
<comment type="subcellular location">
    <subcellularLocation>
        <location evidence="1">Cytoplasm</location>
    </subcellularLocation>
</comment>
<comment type="similarity">
    <text evidence="2">Belongs to the PRA-PH family.</text>
</comment>
<comment type="sequence caution" evidence="2">
    <conflict type="erroneous initiation">
        <sequence resource="EMBL-CDS" id="AAK40910"/>
    </conflict>
</comment>
<keyword id="KW-0028">Amino-acid biosynthesis</keyword>
<keyword id="KW-0067">ATP-binding</keyword>
<keyword id="KW-0963">Cytoplasm</keyword>
<keyword id="KW-0368">Histidine biosynthesis</keyword>
<keyword id="KW-0378">Hydrolase</keyword>
<keyword id="KW-0547">Nucleotide-binding</keyword>
<keyword id="KW-1185">Reference proteome</keyword>
<accession>O33776</accession>
<proteinExistence type="inferred from homology"/>
<sequence>MSNEIVDELYKIILDRIEKRPTGSYTAEIVNKGKPYVARKVGEESVETIVASLAENKERFISEVADLIYHLLVLMALEGVTPEDIYRELERRRK</sequence>
<evidence type="ECO:0000250" key="1"/>
<evidence type="ECO:0000305" key="2"/>